<reference key="1">
    <citation type="submission" date="2006-05" db="EMBL/GenBank/DDBJ databases">
        <authorList>
            <consortium name="Genoscope"/>
        </authorList>
    </citation>
    <scope>NUCLEOTIDE SEQUENCE [LARGE SCALE GENOMIC DNA]</scope>
    <source>
        <strain>RCC307</strain>
    </source>
</reference>
<gene>
    <name evidence="1" type="primary">psbD1</name>
    <name type="ordered locus">SynRCC307_0259</name>
</gene>
<gene>
    <name evidence="1" type="primary">psbD2</name>
    <name type="ordered locus">SynRCC307_1695</name>
</gene>
<evidence type="ECO:0000255" key="1">
    <source>
        <dbReference type="HAMAP-Rule" id="MF_01383"/>
    </source>
</evidence>
<feature type="chain" id="PRO_0000359611" description="Photosystem II D2 protein">
    <location>
        <begin position="1"/>
        <end position="352"/>
    </location>
</feature>
<feature type="transmembrane region" description="Helical" evidence="1">
    <location>
        <begin position="40"/>
        <end position="60"/>
    </location>
</feature>
<feature type="transmembrane region" description="Helical" evidence="1">
    <location>
        <begin position="124"/>
        <end position="140"/>
    </location>
</feature>
<feature type="transmembrane region" description="Helical" evidence="1">
    <location>
        <begin position="152"/>
        <end position="165"/>
    </location>
</feature>
<feature type="transmembrane region" description="Helical" evidence="1">
    <location>
        <begin position="207"/>
        <end position="227"/>
    </location>
</feature>
<feature type="transmembrane region" description="Helical" evidence="1">
    <location>
        <begin position="278"/>
        <end position="294"/>
    </location>
</feature>
<feature type="binding site" description="axial binding residue" evidence="1">
    <location>
        <position position="117"/>
    </location>
    <ligand>
        <name>chlorophyll a</name>
        <dbReference type="ChEBI" id="CHEBI:58416"/>
        <label>ChlzD2</label>
    </ligand>
    <ligandPart>
        <name>Mg</name>
        <dbReference type="ChEBI" id="CHEBI:25107"/>
    </ligandPart>
</feature>
<feature type="binding site" evidence="1">
    <location>
        <position position="129"/>
    </location>
    <ligand>
        <name>pheophytin a</name>
        <dbReference type="ChEBI" id="CHEBI:136840"/>
        <label>D2</label>
    </ligand>
</feature>
<feature type="binding site" evidence="1">
    <location>
        <position position="142"/>
    </location>
    <ligand>
        <name>pheophytin a</name>
        <dbReference type="ChEBI" id="CHEBI:136840"/>
        <label>D2</label>
    </ligand>
</feature>
<feature type="binding site" description="axial binding residue" evidence="1">
    <location>
        <position position="197"/>
    </location>
    <ligand>
        <name>chlorophyll a</name>
        <dbReference type="ChEBI" id="CHEBI:58416"/>
        <label>PD2</label>
    </ligand>
    <ligandPart>
        <name>Mg</name>
        <dbReference type="ChEBI" id="CHEBI:25107"/>
    </ligandPart>
</feature>
<feature type="binding site" evidence="1">
    <location>
        <position position="214"/>
    </location>
    <ligand>
        <name>a plastoquinone</name>
        <dbReference type="ChEBI" id="CHEBI:17757"/>
        <label>Q(A)</label>
    </ligand>
</feature>
<feature type="binding site" evidence="1">
    <location>
        <position position="214"/>
    </location>
    <ligand>
        <name>Fe cation</name>
        <dbReference type="ChEBI" id="CHEBI:24875"/>
        <note>ligand shared with heterodimeric partner</note>
    </ligand>
</feature>
<feature type="binding site" evidence="1">
    <location>
        <position position="261"/>
    </location>
    <ligand>
        <name>a plastoquinone</name>
        <dbReference type="ChEBI" id="CHEBI:17757"/>
        <label>Q(A)</label>
    </ligand>
</feature>
<feature type="binding site" evidence="1">
    <location>
        <position position="268"/>
    </location>
    <ligand>
        <name>Fe cation</name>
        <dbReference type="ChEBI" id="CHEBI:24875"/>
        <note>ligand shared with heterodimeric partner</note>
    </ligand>
</feature>
<name>PSBD_SYNR3</name>
<organism>
    <name type="scientific">Synechococcus sp. (strain RCC307)</name>
    <dbReference type="NCBI Taxonomy" id="316278"/>
    <lineage>
        <taxon>Bacteria</taxon>
        <taxon>Bacillati</taxon>
        <taxon>Cyanobacteriota</taxon>
        <taxon>Cyanophyceae</taxon>
        <taxon>Synechococcales</taxon>
        <taxon>Synechococcaceae</taxon>
        <taxon>Synechococcus</taxon>
    </lineage>
</organism>
<comment type="function">
    <text evidence="1">Photosystem II (PSII) is a light-driven water:plastoquinone oxidoreductase that uses light energy to abstract electrons from H(2)O, generating O(2) and a proton gradient subsequently used for ATP formation. It consists of a core antenna complex that captures photons, and an electron transfer chain that converts photonic excitation into a charge separation. The D1/D2 (PsbA/PsbD) reaction center heterodimer binds P680, the primary electron donor of PSII as well as several subsequent electron acceptors. D2 is needed for assembly of a stable PSII complex.</text>
</comment>
<comment type="catalytic activity">
    <reaction evidence="1">
        <text>2 a plastoquinone + 4 hnu + 2 H2O = 2 a plastoquinol + O2</text>
        <dbReference type="Rhea" id="RHEA:36359"/>
        <dbReference type="Rhea" id="RHEA-COMP:9561"/>
        <dbReference type="Rhea" id="RHEA-COMP:9562"/>
        <dbReference type="ChEBI" id="CHEBI:15377"/>
        <dbReference type="ChEBI" id="CHEBI:15379"/>
        <dbReference type="ChEBI" id="CHEBI:17757"/>
        <dbReference type="ChEBI" id="CHEBI:30212"/>
        <dbReference type="ChEBI" id="CHEBI:62192"/>
        <dbReference type="EC" id="1.10.3.9"/>
    </reaction>
</comment>
<comment type="cofactor">
    <text evidence="1">The D1/D2 heterodimer binds P680, chlorophylls that are the primary electron donor of PSII, and subsequent electron acceptors. It shares a non-heme iron and each subunit binds pheophytin, quinone, additional chlorophylls, carotenoids and lipids. There is also a Cl(-1) ion associated with D1 and D2, which is required for oxygen evolution. The PSII complex binds additional chlorophylls, carotenoids and specific lipids.</text>
</comment>
<comment type="subunit">
    <text evidence="1">PSII is composed of 1 copy each of membrane proteins PsbA, PsbB, PsbC, PsbD, PsbE, PsbF, PsbH, PsbI, PsbJ, PsbK, PsbL, PsbM, PsbT, PsbX, PsbY, PsbZ, Psb30/Ycf12, peripheral proteins PsbO, CyanoQ (PsbQ), PsbU, PsbV and a large number of cofactors. It forms dimeric complexes.</text>
</comment>
<comment type="subcellular location">
    <subcellularLocation>
        <location evidence="1">Cellular thylakoid membrane</location>
        <topology evidence="1">Multi-pass membrane protein</topology>
    </subcellularLocation>
</comment>
<comment type="miscellaneous">
    <text evidence="1">2 of the reaction center chlorophylls (ChlD1 and ChlD2) are entirely coordinated by water.</text>
</comment>
<comment type="similarity">
    <text evidence="1">Belongs to the reaction center PufL/M/PsbA/D family.</text>
</comment>
<protein>
    <recommendedName>
        <fullName evidence="1">Photosystem II D2 protein</fullName>
        <shortName evidence="1">PSII D2 protein</shortName>
        <ecNumber evidence="1">1.10.3.9</ecNumber>
    </recommendedName>
    <alternativeName>
        <fullName evidence="1">Photosystem Q(A) protein</fullName>
    </alternativeName>
</protein>
<accession>A5GQK3</accession>
<keyword id="KW-0148">Chlorophyll</keyword>
<keyword id="KW-0157">Chromophore</keyword>
<keyword id="KW-0249">Electron transport</keyword>
<keyword id="KW-0408">Iron</keyword>
<keyword id="KW-0460">Magnesium</keyword>
<keyword id="KW-0472">Membrane</keyword>
<keyword id="KW-0479">Metal-binding</keyword>
<keyword id="KW-0560">Oxidoreductase</keyword>
<keyword id="KW-0602">Photosynthesis</keyword>
<keyword id="KW-0604">Photosystem II</keyword>
<keyword id="KW-1185">Reference proteome</keyword>
<keyword id="KW-0793">Thylakoid</keyword>
<keyword id="KW-0812">Transmembrane</keyword>
<keyword id="KW-1133">Transmembrane helix</keyword>
<keyword id="KW-0813">Transport</keyword>
<sequence length="352" mass="39234">MTIAVGRAPAGRGWFDVLDDWLKRDRFVFVGWSGLLLFPCAYMALGGWLTGTTFVTSWYTHGIASSYLEGCNFLTAAVSTPADSMGHSLLLLWGPEAQGDFVRWCQLGGLWAFVALHGAFGLIGFMLRQFEIARLVGIRPYNAIAFSGPIAVFVSVFLMYPLGQSSWFFAPSFGVAAIFRFLLFLQGFHNWTLNPFHMMGVAGILGGALLCAIHGATVENTLFEDGDGANTFKAFEPTQEEETYSMVTANRFWSQIFGIAFSNKRWLHFFMLFVPVMGLWTSSIGIIGLALNLRAYDFVSQELRAAEDPEFETFYTKNILLNEGLRAWMAPADQPHENFIFPEEVLPRGNAL</sequence>
<dbReference type="EC" id="1.10.3.9" evidence="1"/>
<dbReference type="EMBL" id="CT978603">
    <property type="protein sequence ID" value="CAK27162.1"/>
    <property type="molecule type" value="Genomic_DNA"/>
</dbReference>
<dbReference type="EMBL" id="CT978603">
    <property type="protein sequence ID" value="CAK28598.1"/>
    <property type="molecule type" value="Genomic_DNA"/>
</dbReference>
<dbReference type="SMR" id="A5GQK3"/>
<dbReference type="STRING" id="316278.SynRCC307_0259"/>
<dbReference type="KEGG" id="syr:SynRCC307_0259"/>
<dbReference type="KEGG" id="syr:SynRCC307_1695"/>
<dbReference type="eggNOG" id="ENOG502Z8JK">
    <property type="taxonomic scope" value="Bacteria"/>
</dbReference>
<dbReference type="HOGENOM" id="CLU_077965_0_0_3"/>
<dbReference type="OrthoDB" id="505356at2"/>
<dbReference type="Proteomes" id="UP000001115">
    <property type="component" value="Chromosome"/>
</dbReference>
<dbReference type="GO" id="GO:0009523">
    <property type="term" value="C:photosystem II"/>
    <property type="evidence" value="ECO:0007669"/>
    <property type="project" value="UniProtKB-KW"/>
</dbReference>
<dbReference type="GO" id="GO:0031676">
    <property type="term" value="C:plasma membrane-derived thylakoid membrane"/>
    <property type="evidence" value="ECO:0007669"/>
    <property type="project" value="UniProtKB-SubCell"/>
</dbReference>
<dbReference type="GO" id="GO:0016168">
    <property type="term" value="F:chlorophyll binding"/>
    <property type="evidence" value="ECO:0007669"/>
    <property type="project" value="UniProtKB-UniRule"/>
</dbReference>
<dbReference type="GO" id="GO:0045156">
    <property type="term" value="F:electron transporter, transferring electrons within the cyclic electron transport pathway of photosynthesis activity"/>
    <property type="evidence" value="ECO:0007669"/>
    <property type="project" value="InterPro"/>
</dbReference>
<dbReference type="GO" id="GO:0005506">
    <property type="term" value="F:iron ion binding"/>
    <property type="evidence" value="ECO:0007669"/>
    <property type="project" value="UniProtKB-UniRule"/>
</dbReference>
<dbReference type="GO" id="GO:0010242">
    <property type="term" value="F:oxygen evolving activity"/>
    <property type="evidence" value="ECO:0007669"/>
    <property type="project" value="UniProtKB-EC"/>
</dbReference>
<dbReference type="GO" id="GO:0009772">
    <property type="term" value="P:photosynthetic electron transport in photosystem II"/>
    <property type="evidence" value="ECO:0007669"/>
    <property type="project" value="InterPro"/>
</dbReference>
<dbReference type="CDD" id="cd09288">
    <property type="entry name" value="Photosystem-II_D2"/>
    <property type="match status" value="1"/>
</dbReference>
<dbReference type="FunFam" id="1.20.85.10:FF:000001">
    <property type="entry name" value="photosystem II D2 protein-like"/>
    <property type="match status" value="1"/>
</dbReference>
<dbReference type="Gene3D" id="1.20.85.10">
    <property type="entry name" value="Photosystem II protein D1-like"/>
    <property type="match status" value="1"/>
</dbReference>
<dbReference type="HAMAP" id="MF_01383">
    <property type="entry name" value="PSII_PsbD_D2"/>
    <property type="match status" value="1"/>
</dbReference>
<dbReference type="InterPro" id="IPR055266">
    <property type="entry name" value="D1/D2"/>
</dbReference>
<dbReference type="InterPro" id="IPR036854">
    <property type="entry name" value="Photo_II_D1/D2_sf"/>
</dbReference>
<dbReference type="InterPro" id="IPR000484">
    <property type="entry name" value="Photo_RC_L/M"/>
</dbReference>
<dbReference type="InterPro" id="IPR055265">
    <property type="entry name" value="Photo_RC_L/M_CS"/>
</dbReference>
<dbReference type="InterPro" id="IPR005868">
    <property type="entry name" value="PSII_PsbD/D2"/>
</dbReference>
<dbReference type="NCBIfam" id="TIGR01152">
    <property type="entry name" value="psbD"/>
    <property type="match status" value="1"/>
</dbReference>
<dbReference type="PANTHER" id="PTHR33149:SF12">
    <property type="entry name" value="PHOTOSYSTEM II D2 PROTEIN"/>
    <property type="match status" value="1"/>
</dbReference>
<dbReference type="PANTHER" id="PTHR33149">
    <property type="entry name" value="PHOTOSYSTEM II PROTEIN D1"/>
    <property type="match status" value="1"/>
</dbReference>
<dbReference type="Pfam" id="PF00124">
    <property type="entry name" value="Photo_RC"/>
    <property type="match status" value="1"/>
</dbReference>
<dbReference type="PRINTS" id="PR00256">
    <property type="entry name" value="REACTNCENTRE"/>
</dbReference>
<dbReference type="SUPFAM" id="SSF81483">
    <property type="entry name" value="Bacterial photosystem II reaction centre, L and M subunits"/>
    <property type="match status" value="1"/>
</dbReference>
<dbReference type="PROSITE" id="PS00244">
    <property type="entry name" value="REACTION_CENTER"/>
    <property type="match status" value="1"/>
</dbReference>
<proteinExistence type="inferred from homology"/>